<keyword id="KW-0066">ATP synthesis</keyword>
<keyword id="KW-0997">Cell inner membrane</keyword>
<keyword id="KW-1003">Cell membrane</keyword>
<keyword id="KW-0138">CF(0)</keyword>
<keyword id="KW-0375">Hydrogen ion transport</keyword>
<keyword id="KW-0406">Ion transport</keyword>
<keyword id="KW-0472">Membrane</keyword>
<keyword id="KW-0812">Transmembrane</keyword>
<keyword id="KW-1133">Transmembrane helix</keyword>
<keyword id="KW-0813">Transport</keyword>
<proteinExistence type="inferred from homology"/>
<dbReference type="EMBL" id="CP000388">
    <property type="protein sequence ID" value="ABG42800.1"/>
    <property type="molecule type" value="Genomic_DNA"/>
</dbReference>
<dbReference type="RefSeq" id="WP_011576979.1">
    <property type="nucleotide sequence ID" value="NC_008228.1"/>
</dbReference>
<dbReference type="SMR" id="Q15MT8"/>
<dbReference type="STRING" id="342610.Patl_4301"/>
<dbReference type="KEGG" id="pat:Patl_4301"/>
<dbReference type="eggNOG" id="COG0356">
    <property type="taxonomic scope" value="Bacteria"/>
</dbReference>
<dbReference type="HOGENOM" id="CLU_041018_1_0_6"/>
<dbReference type="OrthoDB" id="9789241at2"/>
<dbReference type="Proteomes" id="UP000001981">
    <property type="component" value="Chromosome"/>
</dbReference>
<dbReference type="GO" id="GO:0005886">
    <property type="term" value="C:plasma membrane"/>
    <property type="evidence" value="ECO:0007669"/>
    <property type="project" value="UniProtKB-SubCell"/>
</dbReference>
<dbReference type="GO" id="GO:0045259">
    <property type="term" value="C:proton-transporting ATP synthase complex"/>
    <property type="evidence" value="ECO:0007669"/>
    <property type="project" value="UniProtKB-KW"/>
</dbReference>
<dbReference type="GO" id="GO:0046933">
    <property type="term" value="F:proton-transporting ATP synthase activity, rotational mechanism"/>
    <property type="evidence" value="ECO:0007669"/>
    <property type="project" value="UniProtKB-UniRule"/>
</dbReference>
<dbReference type="GO" id="GO:0042777">
    <property type="term" value="P:proton motive force-driven plasma membrane ATP synthesis"/>
    <property type="evidence" value="ECO:0007669"/>
    <property type="project" value="TreeGrafter"/>
</dbReference>
<dbReference type="CDD" id="cd00310">
    <property type="entry name" value="ATP-synt_Fo_a_6"/>
    <property type="match status" value="1"/>
</dbReference>
<dbReference type="FunFam" id="1.20.120.220:FF:000002">
    <property type="entry name" value="ATP synthase subunit a"/>
    <property type="match status" value="1"/>
</dbReference>
<dbReference type="Gene3D" id="1.20.120.220">
    <property type="entry name" value="ATP synthase, F0 complex, subunit A"/>
    <property type="match status" value="1"/>
</dbReference>
<dbReference type="HAMAP" id="MF_01393">
    <property type="entry name" value="ATP_synth_a_bact"/>
    <property type="match status" value="1"/>
</dbReference>
<dbReference type="InterPro" id="IPR045082">
    <property type="entry name" value="ATP_syn_F0_a_bact/chloroplast"/>
</dbReference>
<dbReference type="InterPro" id="IPR000568">
    <property type="entry name" value="ATP_synth_F0_asu"/>
</dbReference>
<dbReference type="InterPro" id="IPR023011">
    <property type="entry name" value="ATP_synth_F0_asu_AS"/>
</dbReference>
<dbReference type="InterPro" id="IPR035908">
    <property type="entry name" value="F0_ATP_A_sf"/>
</dbReference>
<dbReference type="NCBIfam" id="TIGR01131">
    <property type="entry name" value="ATP_synt_6_or_A"/>
    <property type="match status" value="1"/>
</dbReference>
<dbReference type="NCBIfam" id="NF004477">
    <property type="entry name" value="PRK05815.1-1"/>
    <property type="match status" value="1"/>
</dbReference>
<dbReference type="PANTHER" id="PTHR42823">
    <property type="entry name" value="ATP SYNTHASE SUBUNIT A, CHLOROPLASTIC"/>
    <property type="match status" value="1"/>
</dbReference>
<dbReference type="PANTHER" id="PTHR42823:SF3">
    <property type="entry name" value="ATP SYNTHASE SUBUNIT A, CHLOROPLASTIC"/>
    <property type="match status" value="1"/>
</dbReference>
<dbReference type="Pfam" id="PF00119">
    <property type="entry name" value="ATP-synt_A"/>
    <property type="match status" value="1"/>
</dbReference>
<dbReference type="SUPFAM" id="SSF81336">
    <property type="entry name" value="F1F0 ATP synthase subunit A"/>
    <property type="match status" value="1"/>
</dbReference>
<dbReference type="PROSITE" id="PS00449">
    <property type="entry name" value="ATPASE_A"/>
    <property type="match status" value="1"/>
</dbReference>
<organism>
    <name type="scientific">Pseudoalteromonas atlantica (strain T6c / ATCC BAA-1087)</name>
    <dbReference type="NCBI Taxonomy" id="3042615"/>
    <lineage>
        <taxon>Bacteria</taxon>
        <taxon>Pseudomonadati</taxon>
        <taxon>Pseudomonadota</taxon>
        <taxon>Gammaproteobacteria</taxon>
        <taxon>Alteromonadales</taxon>
        <taxon>Alteromonadaceae</taxon>
        <taxon>Paraglaciecola</taxon>
    </lineage>
</organism>
<sequence length="270" mass="29795">MAGSAGEQTISGYIQHHLTNASVGEGFWTFHVDTLAWSVVLGLVFILSFRAVAKKASAGVPGKWQACVELIVEFVDDTVKSTYHGKSALIAPLALTIFVWVLLMNLMDLIPVDFLPTAAALIAGESMDVIAAGQSHTYMKVVPTTDVNMTFALSLGVFALMIFYSVKIKGFGGFMKELYAHPFNTPWLYWFNFILELVSLIAKPLSLSLRLFGNLYAGELIFILIAGTLGVWQLPIHFLWAAFHLLVIPLQAFIFMMLTIVYLSLASEEH</sequence>
<evidence type="ECO:0000255" key="1">
    <source>
        <dbReference type="HAMAP-Rule" id="MF_01393"/>
    </source>
</evidence>
<accession>Q15MT8</accession>
<comment type="function">
    <text evidence="1">Key component of the proton channel; it plays a direct role in the translocation of protons across the membrane.</text>
</comment>
<comment type="subunit">
    <text evidence="1">F-type ATPases have 2 components, CF(1) - the catalytic core - and CF(0) - the membrane proton channel. CF(1) has five subunits: alpha(3), beta(3), gamma(1), delta(1), epsilon(1). CF(0) has three main subunits: a(1), b(2) and c(9-12). The alpha and beta chains form an alternating ring which encloses part of the gamma chain. CF(1) is attached to CF(0) by a central stalk formed by the gamma and epsilon chains, while a peripheral stalk is formed by the delta and b chains.</text>
</comment>
<comment type="subcellular location">
    <subcellularLocation>
        <location evidence="1">Cell inner membrane</location>
        <topology evidence="1">Multi-pass membrane protein</topology>
    </subcellularLocation>
</comment>
<comment type="similarity">
    <text evidence="1">Belongs to the ATPase A chain family.</text>
</comment>
<feature type="chain" id="PRO_0000362389" description="ATP synthase subunit a">
    <location>
        <begin position="1"/>
        <end position="270"/>
    </location>
</feature>
<feature type="transmembrane region" description="Helical" evidence="1">
    <location>
        <begin position="27"/>
        <end position="47"/>
    </location>
</feature>
<feature type="transmembrane region" description="Helical" evidence="1">
    <location>
        <begin position="90"/>
        <end position="110"/>
    </location>
</feature>
<feature type="transmembrane region" description="Helical" evidence="1">
    <location>
        <begin position="147"/>
        <end position="166"/>
    </location>
</feature>
<feature type="transmembrane region" description="Helical" evidence="1">
    <location>
        <begin position="182"/>
        <end position="202"/>
    </location>
</feature>
<feature type="transmembrane region" description="Helical" evidence="1">
    <location>
        <begin position="211"/>
        <end position="231"/>
    </location>
</feature>
<feature type="transmembrane region" description="Helical" evidence="1">
    <location>
        <begin position="238"/>
        <end position="258"/>
    </location>
</feature>
<gene>
    <name evidence="1" type="primary">atpB</name>
    <name type="ordered locus">Patl_4301</name>
</gene>
<protein>
    <recommendedName>
        <fullName evidence="1">ATP synthase subunit a</fullName>
    </recommendedName>
    <alternativeName>
        <fullName evidence="1">ATP synthase F0 sector subunit a</fullName>
    </alternativeName>
    <alternativeName>
        <fullName evidence="1">F-ATPase subunit 6</fullName>
    </alternativeName>
</protein>
<reference key="1">
    <citation type="submission" date="2006-06" db="EMBL/GenBank/DDBJ databases">
        <title>Complete sequence of Pseudoalteromonas atlantica T6c.</title>
        <authorList>
            <consortium name="US DOE Joint Genome Institute"/>
            <person name="Copeland A."/>
            <person name="Lucas S."/>
            <person name="Lapidus A."/>
            <person name="Barry K."/>
            <person name="Detter J.C."/>
            <person name="Glavina del Rio T."/>
            <person name="Hammon N."/>
            <person name="Israni S."/>
            <person name="Dalin E."/>
            <person name="Tice H."/>
            <person name="Pitluck S."/>
            <person name="Saunders E."/>
            <person name="Brettin T."/>
            <person name="Bruce D."/>
            <person name="Han C."/>
            <person name="Tapia R."/>
            <person name="Gilna P."/>
            <person name="Schmutz J."/>
            <person name="Larimer F."/>
            <person name="Land M."/>
            <person name="Hauser L."/>
            <person name="Kyrpides N."/>
            <person name="Kim E."/>
            <person name="Karls A.C."/>
            <person name="Bartlett D."/>
            <person name="Higgins B.P."/>
            <person name="Richardson P."/>
        </authorList>
    </citation>
    <scope>NUCLEOTIDE SEQUENCE [LARGE SCALE GENOMIC DNA]</scope>
    <source>
        <strain>T6c / ATCC BAA-1087</strain>
    </source>
</reference>
<name>ATP6_PSEA6</name>